<feature type="transit peptide" description="Mitochondrion">
    <location>
        <begin position="1"/>
        <end position="61"/>
    </location>
</feature>
<feature type="chain" id="PRO_0000002557" description="ATP synthase F(0) complex subunit C1, mitochondrial">
    <location>
        <begin position="62"/>
        <end position="136"/>
    </location>
</feature>
<feature type="transmembrane region" description="Helical" evidence="2">
    <location>
        <begin position="77"/>
        <end position="97"/>
    </location>
</feature>
<feature type="transmembrane region" description="Helical" evidence="2">
    <location>
        <begin position="112"/>
        <end position="132"/>
    </location>
</feature>
<feature type="site" description="Reversibly protonated during proton transport" evidence="1">
    <location>
        <position position="119"/>
    </location>
</feature>
<feature type="modified residue" description="N6,N6,N6-trimethyllysine" evidence="3">
    <location>
        <position position="104"/>
    </location>
</feature>
<feature type="sequence conflict" description="In Ref. 6; AAA51806." evidence="6" ref="6">
    <original>E</original>
    <variation>G</variation>
    <location>
        <position position="53"/>
    </location>
</feature>
<feature type="helix" evidence="17">
    <location>
        <begin position="63"/>
        <end position="77"/>
    </location>
</feature>
<feature type="helix" evidence="17">
    <location>
        <begin position="80"/>
        <end position="99"/>
    </location>
</feature>
<feature type="helix" evidence="17">
    <location>
        <begin position="101"/>
        <end position="103"/>
    </location>
</feature>
<feature type="helix" evidence="17">
    <location>
        <begin position="104"/>
        <end position="133"/>
    </location>
</feature>
<protein>
    <recommendedName>
        <fullName evidence="6">ATP synthase F(0) complex subunit C1, mitochondrial</fullName>
    </recommendedName>
    <alternativeName>
        <fullName>ATP synthase lipid-binding protein</fullName>
    </alternativeName>
    <alternativeName>
        <fullName evidence="8">ATP synthase membrane subunit c locus 1</fullName>
    </alternativeName>
    <alternativeName>
        <fullName>ATP synthase proteolipid P1</fullName>
    </alternativeName>
    <alternativeName>
        <fullName>ATP synthase proton-transporting mitochondrial F(0) complex subunit C1</fullName>
    </alternativeName>
    <alternativeName>
        <fullName>ATPase protein 9</fullName>
    </alternativeName>
    <alternativeName>
        <fullName>ATPase subunit c</fullName>
    </alternativeName>
    <alternativeName>
        <fullName evidence="6">Proton-conducting channel, ATP synthase F(0) complex subunit c</fullName>
    </alternativeName>
</protein>
<organism>
    <name type="scientific">Homo sapiens</name>
    <name type="common">Human</name>
    <dbReference type="NCBI Taxonomy" id="9606"/>
    <lineage>
        <taxon>Eukaryota</taxon>
        <taxon>Metazoa</taxon>
        <taxon>Chordata</taxon>
        <taxon>Craniata</taxon>
        <taxon>Vertebrata</taxon>
        <taxon>Euteleostomi</taxon>
        <taxon>Mammalia</taxon>
        <taxon>Eutheria</taxon>
        <taxon>Euarchontoglires</taxon>
        <taxon>Primates</taxon>
        <taxon>Haplorrhini</taxon>
        <taxon>Catarrhini</taxon>
        <taxon>Hominidae</taxon>
        <taxon>Homo</taxon>
    </lineage>
</organism>
<keyword id="KW-0002">3D-structure</keyword>
<keyword id="KW-0138">CF(0)</keyword>
<keyword id="KW-0375">Hydrogen ion transport</keyword>
<keyword id="KW-0406">Ion transport</keyword>
<keyword id="KW-0446">Lipid-binding</keyword>
<keyword id="KW-0472">Membrane</keyword>
<keyword id="KW-0488">Methylation</keyword>
<keyword id="KW-0496">Mitochondrion</keyword>
<keyword id="KW-1267">Proteomics identification</keyword>
<keyword id="KW-1185">Reference proteome</keyword>
<keyword id="KW-0809">Transit peptide</keyword>
<keyword id="KW-0812">Transmembrane</keyword>
<keyword id="KW-1133">Transmembrane helix</keyword>
<keyword id="KW-0813">Transport</keyword>
<accession>P05496</accession>
<sequence length="136" mass="14277">MQTAGALFISPALIRCCTRGLIRPVSASFLNSPVNSSKQPSYSNFPLQVARREFQTSVVSRDIDTAAKFIGAGAATVGVAGSGAGIGTVFGSLIIGYARNPSLKQQLFSYAILGFALSEAMGLFCLMVAFLILFAM</sequence>
<comment type="function">
    <text evidence="5 7">Subunit c, of the mitochondrial membrane ATP synthase complex (F(1)F(0) ATP synthase or Complex V) that produces ATP from ADP in the presence of a proton gradient across the membrane which is generated by electron transport complexes of the respiratory chain (Probable). ATP synthase complex consist of a soluble F(1) head domain - the catalytic core - and a membrane F(1) domain - the membrane proton channel (PubMed:37244256). These two domains are linked by a central stalk rotating inside the F(1) region and a stationary peripheral stalk (PubMed:37244256). During catalysis, ATP synthesis in the catalytic domain of F(1) is coupled via a rotary mechanism of the central stalk subunits to proton translocation (Probable). With the subunit a (MT-ATP6), forms the proton-conducting channel in the F(0) domain, that contains two crucial half-channels (inlet and outlet) that facilitate proton movement from the mitochondrial intermembrane space (IMS) into the matrix (PubMed:37244256). Protons are taken up via the inlet half-channel and released through the outlet half-channel, following a Grotthuss mechanism (PubMed:37244256).</text>
</comment>
<comment type="catalytic activity">
    <reaction evidence="7">
        <text>H(+)(in) = H(+)(out)</text>
        <dbReference type="Rhea" id="RHEA:34979"/>
        <dbReference type="ChEBI" id="CHEBI:15378"/>
    </reaction>
</comment>
<comment type="subunit">
    <text evidence="4 5">Homooctamer; the c-ring consists of eight c subunits forming a circle, and each subunit adopts a hairpin shape (PubMed:37244256). Component of the ATP synthase complex composed at least of ATP5F1A/subunit alpha, ATP5F1B/subunit beta, ATP5MC1/subunit c (homooctomer), MT-ATP6/subunit a, MT-ATP8/subunit 8, ATP5ME/subunit e, ATP5MF/subunit f, ATP5MG/subunit g, ATP5MK/subunit k, ATP5MJ/subunit j, ATP5F1C/subunit gamma, ATP5F1D/subunit delta, ATP5F1E/subunit epsilon, ATP5PF/subunit F6, ATP5PB/subunit b, ATP5PD/subunit d, ATP5PO/subunit OSCP (PubMed:37244256). ATP synthase complex consists of a soluble F(1) head domain (subunits alpha(3) and beta(3)) - the catalytic core - and a membrane F(0) domain - the membrane proton channel (subunits c, a, 8, e, f, g, k and j) (PubMed:37244256). These two domains are linked by a central stalk (subunits gamma, delta, and epsilon) rotating inside the F1 region and a stationary peripheral stalk (subunits F6, b, d, and OSCP) (PubMed:37244256). Interacts with TMEM70 (homooligomer form); this interaction facilitates the oligomer formation of subunit c/ATP5MC1 (c-ring) and the c-ring membrane insertion and also protects ATP5MC1 against intramitochondrial proteolysis (PubMed:31652072).</text>
</comment>
<comment type="interaction">
    <interactant intactId="EBI-10194585">
        <id>P05496</id>
    </interactant>
    <interactant intactId="EBI-77797">
        <id>P35609</id>
        <label>ACTN2</label>
    </interactant>
    <organismsDiffer>false</organismsDiffer>
    <experiments>3</experiments>
</comment>
<comment type="interaction">
    <interactant intactId="EBI-10194585">
        <id>P05496</id>
    </interactant>
    <interactant intactId="EBI-749955">
        <id>Q86WT6</id>
        <label>TRIM69</label>
    </interactant>
    <organismsDiffer>false</organismsDiffer>
    <experiments>4</experiments>
</comment>
<comment type="interaction">
    <interactant intactId="EBI-10194585">
        <id>P05496</id>
    </interactant>
    <interactant intactId="EBI-11525489">
        <id>Q86WT6-2</id>
        <label>TRIM69</label>
    </interactant>
    <organismsDiffer>false</organismsDiffer>
    <experiments>3</experiments>
</comment>
<comment type="subcellular location">
    <subcellularLocation>
        <location>Mitochondrion membrane</location>
        <topology>Multi-pass membrane protein</topology>
    </subcellularLocation>
</comment>
<comment type="PTM">
    <text evidence="3">Trimethylated by ATPSCKMT at Lys-104. Methylation is required for proper incorporation of the C subunit into the ATP synthase complex and mitochondrial respiration.</text>
</comment>
<comment type="miscellaneous">
    <text>There are three genes which encode the mitochondrial ATP synthase proteolipid and they specify precursors with different import sequences but identical mature proteins. Is the major protein stored in the storage bodies of animals or humans affected with ceroid lipofuscinosis (Batten disease).</text>
</comment>
<comment type="similarity">
    <text evidence="6">Belongs to the ATPase C chain family.</text>
</comment>
<evidence type="ECO:0000250" key="1"/>
<evidence type="ECO:0000255" key="2"/>
<evidence type="ECO:0000269" key="3">
    <source>
    </source>
</evidence>
<evidence type="ECO:0000269" key="4">
    <source>
    </source>
</evidence>
<evidence type="ECO:0000269" key="5">
    <source>
    </source>
</evidence>
<evidence type="ECO:0000305" key="6"/>
<evidence type="ECO:0000305" key="7">
    <source>
    </source>
</evidence>
<evidence type="ECO:0000312" key="8">
    <source>
        <dbReference type="HGNC" id="HGNC:841"/>
    </source>
</evidence>
<evidence type="ECO:0007744" key="9">
    <source>
        <dbReference type="PDB" id="8H9F"/>
    </source>
</evidence>
<evidence type="ECO:0007744" key="10">
    <source>
        <dbReference type="PDB" id="8H9J"/>
    </source>
</evidence>
<evidence type="ECO:0007744" key="11">
    <source>
        <dbReference type="PDB" id="8H9M"/>
    </source>
</evidence>
<evidence type="ECO:0007744" key="12">
    <source>
        <dbReference type="PDB" id="8H9Q"/>
    </source>
</evidence>
<evidence type="ECO:0007744" key="13">
    <source>
        <dbReference type="PDB" id="8H9S"/>
    </source>
</evidence>
<evidence type="ECO:0007744" key="14">
    <source>
        <dbReference type="PDB" id="8H9T"/>
    </source>
</evidence>
<evidence type="ECO:0007744" key="15">
    <source>
        <dbReference type="PDB" id="8H9U"/>
    </source>
</evidence>
<evidence type="ECO:0007744" key="16">
    <source>
        <dbReference type="PDB" id="8H9V"/>
    </source>
</evidence>
<evidence type="ECO:0007829" key="17">
    <source>
        <dbReference type="PDB" id="8H9M"/>
    </source>
</evidence>
<name>AT5G1_HUMAN</name>
<proteinExistence type="evidence at protein level"/>
<dbReference type="EMBL" id="X69907">
    <property type="protein sequence ID" value="CAA49532.1"/>
    <property type="molecule type" value="Genomic_DNA"/>
</dbReference>
<dbReference type="EMBL" id="D13118">
    <property type="protein sequence ID" value="BAA02420.1"/>
    <property type="molecule type" value="mRNA"/>
</dbReference>
<dbReference type="EMBL" id="AL080089">
    <property type="protein sequence ID" value="CAB45704.1"/>
    <property type="molecule type" value="mRNA"/>
</dbReference>
<dbReference type="EMBL" id="BT007230">
    <property type="protein sequence ID" value="AAP35894.1"/>
    <property type="molecule type" value="mRNA"/>
</dbReference>
<dbReference type="EMBL" id="BC004963">
    <property type="protein sequence ID" value="AAH04963.1"/>
    <property type="molecule type" value="mRNA"/>
</dbReference>
<dbReference type="EMBL" id="M16453">
    <property type="protein sequence ID" value="AAA51806.1"/>
    <property type="molecule type" value="mRNA"/>
</dbReference>
<dbReference type="CCDS" id="CCDS11539.1"/>
<dbReference type="PIR" id="S34066">
    <property type="entry name" value="S34066"/>
</dbReference>
<dbReference type="RefSeq" id="NP_001002027.1">
    <property type="nucleotide sequence ID" value="NM_001002027.2"/>
</dbReference>
<dbReference type="RefSeq" id="NP_005166.1">
    <property type="nucleotide sequence ID" value="NM_005175.3"/>
</dbReference>
<dbReference type="PDB" id="8H9F">
    <property type="method" value="EM"/>
    <property type="resolution" value="2.69 A"/>
    <property type="chains" value="1/2/3/4/5/6/7/8=62-136"/>
</dbReference>
<dbReference type="PDB" id="8H9J">
    <property type="method" value="EM"/>
    <property type="resolution" value="3.26 A"/>
    <property type="chains" value="1/2/3/4/5/6/7/8=62-136"/>
</dbReference>
<dbReference type="PDB" id="8H9M">
    <property type="method" value="EM"/>
    <property type="resolution" value="3.00 A"/>
    <property type="chains" value="1/2/3/4/5/6/7/8=62-136"/>
</dbReference>
<dbReference type="PDB" id="8H9Q">
    <property type="method" value="EM"/>
    <property type="resolution" value="3.47 A"/>
    <property type="chains" value="1/2/3/4/5/6/7/8=62-136"/>
</dbReference>
<dbReference type="PDB" id="8H9S">
    <property type="method" value="EM"/>
    <property type="resolution" value="2.53 A"/>
    <property type="chains" value="1/2/3/4/5/6/7/8=62-136"/>
</dbReference>
<dbReference type="PDB" id="8H9T">
    <property type="method" value="EM"/>
    <property type="resolution" value="2.77 A"/>
    <property type="chains" value="1/2/3/4/5/6/7/8=62-136"/>
</dbReference>
<dbReference type="PDB" id="8H9U">
    <property type="method" value="EM"/>
    <property type="resolution" value="2.61 A"/>
    <property type="chains" value="1/2/3/4/5/6/7/8=62-136"/>
</dbReference>
<dbReference type="PDB" id="8H9V">
    <property type="method" value="EM"/>
    <property type="resolution" value="3.02 A"/>
    <property type="chains" value="1/2/3/4/5/6/7/8=62-136"/>
</dbReference>
<dbReference type="PDB" id="8KHF">
    <property type="method" value="EM"/>
    <property type="resolution" value="3.13 A"/>
    <property type="chains" value="1/2/3/4/5/6/7/8=62-136"/>
</dbReference>
<dbReference type="PDB" id="8KI3">
    <property type="method" value="EM"/>
    <property type="resolution" value="2.89 A"/>
    <property type="chains" value="1/2/3/4/5/6/7/8=62-136"/>
</dbReference>
<dbReference type="PDBsum" id="8H9F"/>
<dbReference type="PDBsum" id="8H9J"/>
<dbReference type="PDBsum" id="8H9M"/>
<dbReference type="PDBsum" id="8H9Q"/>
<dbReference type="PDBsum" id="8H9S"/>
<dbReference type="PDBsum" id="8H9T"/>
<dbReference type="PDBsum" id="8H9U"/>
<dbReference type="PDBsum" id="8H9V"/>
<dbReference type="PDBsum" id="8KHF"/>
<dbReference type="PDBsum" id="8KI3"/>
<dbReference type="EMDB" id="EMD-34565"/>
<dbReference type="EMDB" id="EMD-34569"/>
<dbReference type="EMDB" id="EMD-34573"/>
<dbReference type="EMDB" id="EMD-34577"/>
<dbReference type="EMDB" id="EMD-34580"/>
<dbReference type="EMDB" id="EMD-34581"/>
<dbReference type="EMDB" id="EMD-34582"/>
<dbReference type="EMDB" id="EMD-34583"/>
<dbReference type="EMDB" id="EMD-37243"/>
<dbReference type="EMDB" id="EMD-37251"/>
<dbReference type="SMR" id="P05496"/>
<dbReference type="BioGRID" id="107001">
    <property type="interactions" value="40"/>
</dbReference>
<dbReference type="ComplexPortal" id="CPX-6151">
    <property type="entry name" value="Mitochondrial proton-transporting ATP synthase complex"/>
</dbReference>
<dbReference type="CORUM" id="P05496"/>
<dbReference type="FunCoup" id="P05496">
    <property type="interactions" value="821"/>
</dbReference>
<dbReference type="IntAct" id="P05496">
    <property type="interactions" value="27"/>
</dbReference>
<dbReference type="STRING" id="9606.ENSP00000377033"/>
<dbReference type="TCDB" id="3.A.2.1.15">
    <property type="family name" value="the h+- or na+-translocating f-type, v-type and a-type atpase (f-atpase) superfamily"/>
</dbReference>
<dbReference type="iPTMnet" id="P05496"/>
<dbReference type="PhosphoSitePlus" id="P05496"/>
<dbReference type="BioMuta" id="ATP5G1"/>
<dbReference type="jPOST" id="P05496"/>
<dbReference type="MassIVE" id="P05496"/>
<dbReference type="PaxDb" id="9606-ENSP00000377033"/>
<dbReference type="PeptideAtlas" id="P05496"/>
<dbReference type="ProteomicsDB" id="51842"/>
<dbReference type="Pumba" id="P05496"/>
<dbReference type="TopDownProteomics" id="P05496"/>
<dbReference type="Antibodypedia" id="30318">
    <property type="antibodies" value="123 antibodies from 28 providers"/>
</dbReference>
<dbReference type="DNASU" id="516"/>
<dbReference type="Ensembl" id="ENST00000355938.9">
    <property type="protein sequence ID" value="ENSP00000348205.5"/>
    <property type="gene ID" value="ENSG00000159199.14"/>
</dbReference>
<dbReference type="Ensembl" id="ENST00000393366.7">
    <property type="protein sequence ID" value="ENSP00000377033.2"/>
    <property type="gene ID" value="ENSG00000159199.14"/>
</dbReference>
<dbReference type="GeneID" id="516"/>
<dbReference type="KEGG" id="hsa:516"/>
<dbReference type="MANE-Select" id="ENST00000393366.7">
    <property type="protein sequence ID" value="ENSP00000377033.2"/>
    <property type="RefSeq nucleotide sequence ID" value="NM_005175.3"/>
    <property type="RefSeq protein sequence ID" value="NP_005166.1"/>
</dbReference>
<dbReference type="AGR" id="HGNC:841"/>
<dbReference type="CTD" id="516"/>
<dbReference type="DisGeNET" id="516"/>
<dbReference type="GeneCards" id="ATP5MC1"/>
<dbReference type="HGNC" id="HGNC:841">
    <property type="gene designation" value="ATP5MC1"/>
</dbReference>
<dbReference type="HPA" id="ENSG00000159199">
    <property type="expression patterns" value="Tissue enhanced (tongue)"/>
</dbReference>
<dbReference type="MalaCards" id="ATP5MC1"/>
<dbReference type="MIM" id="603192">
    <property type="type" value="gene"/>
</dbReference>
<dbReference type="neXtProt" id="NX_P05496"/>
<dbReference type="OpenTargets" id="ENSG00000159199"/>
<dbReference type="PharmGKB" id="PA25131"/>
<dbReference type="VEuPathDB" id="HostDB:ENSG00000159199"/>
<dbReference type="eggNOG" id="KOG3025">
    <property type="taxonomic scope" value="Eukaryota"/>
</dbReference>
<dbReference type="GeneTree" id="ENSGT00940000154298"/>
<dbReference type="InParanoid" id="P05496"/>
<dbReference type="OMA" id="CPEWIIN"/>
<dbReference type="OrthoDB" id="438052at2759"/>
<dbReference type="PAN-GO" id="P05496">
    <property type="GO annotations" value="2 GO annotations based on evolutionary models"/>
</dbReference>
<dbReference type="PhylomeDB" id="P05496"/>
<dbReference type="TreeFam" id="TF300140"/>
<dbReference type="BioCyc" id="MetaCyc:ENSG00000159199-MONOMER"/>
<dbReference type="PathwayCommons" id="P05496"/>
<dbReference type="Reactome" id="R-HSA-1268020">
    <property type="pathway name" value="Mitochondrial protein import"/>
</dbReference>
<dbReference type="Reactome" id="R-HSA-163210">
    <property type="pathway name" value="Formation of ATP by chemiosmotic coupling"/>
</dbReference>
<dbReference type="Reactome" id="R-HSA-8949613">
    <property type="pathway name" value="Cristae formation"/>
</dbReference>
<dbReference type="SignaLink" id="P05496"/>
<dbReference type="SIGNOR" id="P05496"/>
<dbReference type="BioGRID-ORCS" id="516">
    <property type="hits" value="73 hits in 1146 CRISPR screens"/>
</dbReference>
<dbReference type="ChiTaRS" id="ATP5G1">
    <property type="organism name" value="human"/>
</dbReference>
<dbReference type="GeneWiki" id="ATP5G1"/>
<dbReference type="GenomeRNAi" id="516"/>
<dbReference type="Pharos" id="P05496">
    <property type="development level" value="Tbio"/>
</dbReference>
<dbReference type="PRO" id="PR:P05496"/>
<dbReference type="Proteomes" id="UP000005640">
    <property type="component" value="Chromosome 17"/>
</dbReference>
<dbReference type="RNAct" id="P05496">
    <property type="molecule type" value="protein"/>
</dbReference>
<dbReference type="Bgee" id="ENSG00000159199">
    <property type="expression patterns" value="Expressed in apex of heart and 200 other cell types or tissues"/>
</dbReference>
<dbReference type="ExpressionAtlas" id="P05496">
    <property type="expression patterns" value="baseline and differential"/>
</dbReference>
<dbReference type="GO" id="GO:0005743">
    <property type="term" value="C:mitochondrial inner membrane"/>
    <property type="evidence" value="ECO:0000304"/>
    <property type="project" value="Reactome"/>
</dbReference>
<dbReference type="GO" id="GO:0005739">
    <property type="term" value="C:mitochondrion"/>
    <property type="evidence" value="ECO:0000314"/>
    <property type="project" value="LIFEdb"/>
</dbReference>
<dbReference type="GO" id="GO:0045259">
    <property type="term" value="C:proton-transporting ATP synthase complex"/>
    <property type="evidence" value="ECO:0000314"/>
    <property type="project" value="UniProtKB"/>
</dbReference>
<dbReference type="GO" id="GO:0033177">
    <property type="term" value="C:proton-transporting two-sector ATPase complex, proton-transporting domain"/>
    <property type="evidence" value="ECO:0007669"/>
    <property type="project" value="InterPro"/>
</dbReference>
<dbReference type="GO" id="GO:0008289">
    <property type="term" value="F:lipid binding"/>
    <property type="evidence" value="ECO:0007669"/>
    <property type="project" value="UniProtKB-KW"/>
</dbReference>
<dbReference type="GO" id="GO:0015252">
    <property type="term" value="F:proton channel activity"/>
    <property type="evidence" value="ECO:0000314"/>
    <property type="project" value="UniProtKB"/>
</dbReference>
<dbReference type="GO" id="GO:0015986">
    <property type="term" value="P:proton motive force-driven ATP synthesis"/>
    <property type="evidence" value="ECO:0000314"/>
    <property type="project" value="UniProtKB"/>
</dbReference>
<dbReference type="GO" id="GO:1902600">
    <property type="term" value="P:proton transmembrane transport"/>
    <property type="evidence" value="ECO:0000314"/>
    <property type="project" value="UniProtKB"/>
</dbReference>
<dbReference type="CDD" id="cd18182">
    <property type="entry name" value="ATP-synt_Fo_c_ATP5G3"/>
    <property type="match status" value="1"/>
</dbReference>
<dbReference type="FunFam" id="1.20.20.10:FF:000003">
    <property type="entry name" value="Atp synthase f complex subunit mitochondrial"/>
    <property type="match status" value="1"/>
</dbReference>
<dbReference type="Gene3D" id="1.20.20.10">
    <property type="entry name" value="F1F0 ATP synthase subunit C"/>
    <property type="match status" value="1"/>
</dbReference>
<dbReference type="HAMAP" id="MF_01396">
    <property type="entry name" value="ATP_synth_c_bact"/>
    <property type="match status" value="1"/>
</dbReference>
<dbReference type="InterPro" id="IPR000454">
    <property type="entry name" value="ATP_synth_F0_csu"/>
</dbReference>
<dbReference type="InterPro" id="IPR020537">
    <property type="entry name" value="ATP_synth_F0_csu_DDCD_BS"/>
</dbReference>
<dbReference type="InterPro" id="IPR038662">
    <property type="entry name" value="ATP_synth_F0_csu_sf"/>
</dbReference>
<dbReference type="InterPro" id="IPR002379">
    <property type="entry name" value="ATPase_proteolipid_c-like_dom"/>
</dbReference>
<dbReference type="InterPro" id="IPR035921">
    <property type="entry name" value="F/V-ATP_Csub_sf"/>
</dbReference>
<dbReference type="PANTHER" id="PTHR10031">
    <property type="entry name" value="ATP SYNTHASE LIPID-BINDING PROTEIN, MITOCHONDRIAL"/>
    <property type="match status" value="1"/>
</dbReference>
<dbReference type="PANTHER" id="PTHR10031:SF0">
    <property type="entry name" value="ATPASE PROTEIN 9"/>
    <property type="match status" value="1"/>
</dbReference>
<dbReference type="Pfam" id="PF00137">
    <property type="entry name" value="ATP-synt_C"/>
    <property type="match status" value="1"/>
</dbReference>
<dbReference type="PRINTS" id="PR00124">
    <property type="entry name" value="ATPASEC"/>
</dbReference>
<dbReference type="SUPFAM" id="SSF81333">
    <property type="entry name" value="F1F0 ATP synthase subunit C"/>
    <property type="match status" value="1"/>
</dbReference>
<dbReference type="PROSITE" id="PS00605">
    <property type="entry name" value="ATPASE_C"/>
    <property type="match status" value="1"/>
</dbReference>
<gene>
    <name evidence="8" type="primary">ATP5MC1</name>
    <name evidence="8" type="synonym">ATP5G1</name>
</gene>
<reference key="1">
    <citation type="journal article" date="1993" name="Biochem. J.">
        <title>Sequences of members of the human gene family for the c subunit of mitochondrial ATP synthase.</title>
        <authorList>
            <person name="Dyer M.R."/>
            <person name="Walker J.E."/>
        </authorList>
    </citation>
    <scope>NUCLEOTIDE SEQUENCE [GENOMIC DNA]</scope>
</reference>
<reference key="2">
    <citation type="journal article" date="1993" name="Biochim. Biophys. Acta">
        <title>Molecular cloning and sequence of two cDNAs for human subunit c of H(+)-ATP synthase in mitochondria.</title>
        <authorList>
            <person name="Higuti T."/>
            <person name="Kawamura Y."/>
            <person name="Kuroiwa K."/>
            <person name="Miyazaki S."/>
            <person name="Tsujita H."/>
        </authorList>
    </citation>
    <scope>NUCLEOTIDE SEQUENCE [MRNA]</scope>
</reference>
<reference key="3">
    <citation type="journal article" date="2001" name="Genome Res.">
        <title>Towards a catalog of human genes and proteins: sequencing and analysis of 500 novel complete protein coding human cDNAs.</title>
        <authorList>
            <person name="Wiemann S."/>
            <person name="Weil B."/>
            <person name="Wellenreuther R."/>
            <person name="Gassenhuber J."/>
            <person name="Glassl S."/>
            <person name="Ansorge W."/>
            <person name="Boecher M."/>
            <person name="Bloecker H."/>
            <person name="Bauersachs S."/>
            <person name="Blum H."/>
            <person name="Lauber J."/>
            <person name="Duesterhoeft A."/>
            <person name="Beyer A."/>
            <person name="Koehrer K."/>
            <person name="Strack N."/>
            <person name="Mewes H.-W."/>
            <person name="Ottenwaelder B."/>
            <person name="Obermaier B."/>
            <person name="Tampe J."/>
            <person name="Heubner D."/>
            <person name="Wambutt R."/>
            <person name="Korn B."/>
            <person name="Klein M."/>
            <person name="Poustka A."/>
        </authorList>
    </citation>
    <scope>NUCLEOTIDE SEQUENCE [LARGE SCALE MRNA]</scope>
    <source>
        <tissue>Brain</tissue>
    </source>
</reference>
<reference key="4">
    <citation type="submission" date="2004-10" db="EMBL/GenBank/DDBJ databases">
        <title>Cloning of human full-length CDSs in BD Creator(TM) system donor vector.</title>
        <authorList>
            <person name="Kalnine N."/>
            <person name="Chen X."/>
            <person name="Rolfs A."/>
            <person name="Halleck A."/>
            <person name="Hines L."/>
            <person name="Eisenstein S."/>
            <person name="Koundinya M."/>
            <person name="Raphael J."/>
            <person name="Moreira D."/>
            <person name="Kelley T."/>
            <person name="LaBaer J."/>
            <person name="Lin Y."/>
            <person name="Phelan M."/>
            <person name="Farmer A."/>
        </authorList>
    </citation>
    <scope>NUCLEOTIDE SEQUENCE [LARGE SCALE MRNA]</scope>
</reference>
<reference key="5">
    <citation type="journal article" date="2004" name="Genome Res.">
        <title>The status, quality, and expansion of the NIH full-length cDNA project: the Mammalian Gene Collection (MGC).</title>
        <authorList>
            <consortium name="The MGC Project Team"/>
        </authorList>
    </citation>
    <scope>NUCLEOTIDE SEQUENCE [LARGE SCALE MRNA]</scope>
    <source>
        <tissue>Lung</tissue>
    </source>
</reference>
<reference key="6">
    <citation type="journal article" date="1987" name="Biochem. Biophys. Res. Commun.">
        <title>Human liver cDNA clones encoding proteolipid subunit 9 of the mitochondrial ATPase complex.</title>
        <authorList>
            <person name="Farrell L.B."/>
            <person name="Nagley P."/>
        </authorList>
    </citation>
    <scope>NUCLEOTIDE SEQUENCE [MRNA] OF 37-136</scope>
    <source>
        <tissue>Liver</tissue>
    </source>
</reference>
<reference key="7">
    <citation type="journal article" date="2019" name="FASEB J.">
        <title>TMEM70 facilitates biogenesis of mammalian ATP synthase by promoting subunit c incorporation into the rotor structure of the enzyme.</title>
        <authorList>
            <person name="Kovalcikova J."/>
            <person name="Vrbacky M."/>
            <person name="Pecina P."/>
            <person name="Tauchmannova K."/>
            <person name="Nuskova H."/>
            <person name="Kaplanova V."/>
            <person name="Brazdova A."/>
            <person name="Alan L."/>
            <person name="Elias J."/>
            <person name="Cunatova K."/>
            <person name="Korinek V."/>
            <person name="Sedlacek R."/>
            <person name="Mracek T."/>
            <person name="Houstek J."/>
        </authorList>
    </citation>
    <scope>INTERACTION WITH TMEM70</scope>
    <scope>SUBUNIT</scope>
</reference>
<reference key="8">
    <citation type="journal article" date="2019" name="J. Biol. Chem.">
        <title>Lysine methylation by the mitochondrial methyltransferase FAM173B optimizes the function of mitochondrial ATP synthase.</title>
        <authorList>
            <person name="Malecki J.M."/>
            <person name="Willemen H.L.D.M."/>
            <person name="Pinto R."/>
            <person name="Ho A.Y.Y."/>
            <person name="Moen A."/>
            <person name="Kjoenstad I.F."/>
            <person name="Burgering B.M.T."/>
            <person name="Zwartkruis F."/>
            <person name="Eijkelkamp N."/>
            <person name="Falnes P.O."/>
        </authorList>
    </citation>
    <scope>METHYLATION AT LYS-104</scope>
</reference>
<reference key="9">
    <citation type="journal article" date="2021" name="Biochim. Biophys. Acta">
        <title>TMEM70 forms oligomeric scaffolds within mitochondrial cristae promoting in situ assembly of mammalian ATP synthase proton channel.</title>
        <authorList>
            <person name="Bahri H."/>
            <person name="Buratto J."/>
            <person name="Rojo M."/>
            <person name="Dompierre J.P."/>
            <person name="Salin B."/>
            <person name="Blancard C."/>
            <person name="Cuvellier S."/>
            <person name="Rose M."/>
            <person name="Ben Ammar Elgaaied A."/>
            <person name="Tetaud E."/>
            <person name="di Rago J.P."/>
            <person name="Devin A."/>
            <person name="Duvezin-Caubet S."/>
        </authorList>
    </citation>
    <scope>INTERACTION WITH TMEM70</scope>
</reference>
<reference evidence="9 10 11 12 13 14 15 16" key="10">
    <citation type="journal article" date="2023" name="Mol. Cell">
        <title>Structure of the human ATP synthase.</title>
        <authorList>
            <person name="Lai Y."/>
            <person name="Zhang Y."/>
            <person name="Zhou S."/>
            <person name="Xu J."/>
            <person name="Du Z."/>
            <person name="Feng Z."/>
            <person name="Yu L."/>
            <person name="Zhao Z."/>
            <person name="Wang W."/>
            <person name="Tang Y."/>
            <person name="Yang X."/>
            <person name="Guddat L.W."/>
            <person name="Liu F."/>
            <person name="Gao Y."/>
            <person name="Rao Z."/>
            <person name="Gong H."/>
        </authorList>
    </citation>
    <scope>STRUCTURE BY ELECTRON MICROSCOPY (2.53 ANGSTROMS) OF 62-136</scope>
    <scope>FUNCTION</scope>
    <scope>CATALYTIC ACTIVITY</scope>
    <scope>IDENTIFICATION IN THE ATP SYNTHASE COMPLEX</scope>
    <scope>SUBUNIT</scope>
    <scope>TOPOLOGY</scope>
</reference>